<comment type="function">
    <text evidence="1">Involved in the proteasome-dependent degradation of fructose-1,6-bisphosphatase.</text>
</comment>
<comment type="subcellular location">
    <subcellularLocation>
        <location evidence="1">Cytoplasm</location>
    </subcellularLocation>
    <subcellularLocation>
        <location evidence="1">Nucleus</location>
    </subcellularLocation>
</comment>
<comment type="similarity">
    <text evidence="5">Belongs to the FYV10 family.</text>
</comment>
<comment type="sequence caution" evidence="5">
    <conflict type="erroneous gene model prediction">
        <sequence resource="EMBL-CDS" id="EAW24165"/>
    </conflict>
</comment>
<organism>
    <name type="scientific">Neosartorya fischeri (strain ATCC 1020 / DSM 3700 / CBS 544.65 / FGSC A1164 / JCM 1740 / NRRL 181 / WB 181)</name>
    <name type="common">Aspergillus fischerianus</name>
    <dbReference type="NCBI Taxonomy" id="331117"/>
    <lineage>
        <taxon>Eukaryota</taxon>
        <taxon>Fungi</taxon>
        <taxon>Dikarya</taxon>
        <taxon>Ascomycota</taxon>
        <taxon>Pezizomycotina</taxon>
        <taxon>Eurotiomycetes</taxon>
        <taxon>Eurotiomycetidae</taxon>
        <taxon>Eurotiales</taxon>
        <taxon>Aspergillaceae</taxon>
        <taxon>Aspergillus</taxon>
        <taxon>Aspergillus subgen. Fumigati</taxon>
    </lineage>
</organism>
<keyword id="KW-0963">Cytoplasm</keyword>
<keyword id="KW-0479">Metal-binding</keyword>
<keyword id="KW-0539">Nucleus</keyword>
<keyword id="KW-1185">Reference proteome</keyword>
<keyword id="KW-0862">Zinc</keyword>
<keyword id="KW-0863">Zinc-finger</keyword>
<proteinExistence type="inferred from homology"/>
<sequence length="406" mass="46513">MAAELTSTKLNAENHLLLDQPLLRLPHELARRNFKSVQRLVEREREYVIHALKEAANASLSNDQTPDQTLAALDSMLARMQNLKRKMESIQQEEKKIQNQSRKRIQHLEHLHQIPSLADVKYDQWSRIRLDRLVVDHMLRSGYTESAQRLAQEKGIEDLVDLDVFVQCQRIAQSLRRGETKDALRWCNENKAALKKSQFNLEFELRLQQYIEMLRTGDRGKLMDAMAHAKRYLTPYTETQSKEIHRAAGLLAFPQDTKAEPYKSMYSFDRWNHLSDLFIRTHHELLSLPSSPLLHIALSAGLSALKTPSCHSAYTSSSSNSLSTATSVCPICSTELNELARNMPYAHHAKSYVESDPIVLPNGRIYGQQRLLDMSKKLGCVETGKVKDPTTGEIFDESEMKKVYIM</sequence>
<accession>A1CZJ5</accession>
<reference key="1">
    <citation type="journal article" date="2008" name="PLoS Genet.">
        <title>Genomic islands in the pathogenic filamentous fungus Aspergillus fumigatus.</title>
        <authorList>
            <person name="Fedorova N.D."/>
            <person name="Khaldi N."/>
            <person name="Joardar V.S."/>
            <person name="Maiti R."/>
            <person name="Amedeo P."/>
            <person name="Anderson M.J."/>
            <person name="Crabtree J."/>
            <person name="Silva J.C."/>
            <person name="Badger J.H."/>
            <person name="Albarraq A."/>
            <person name="Angiuoli S."/>
            <person name="Bussey H."/>
            <person name="Bowyer P."/>
            <person name="Cotty P.J."/>
            <person name="Dyer P.S."/>
            <person name="Egan A."/>
            <person name="Galens K."/>
            <person name="Fraser-Liggett C.M."/>
            <person name="Haas B.J."/>
            <person name="Inman J.M."/>
            <person name="Kent R."/>
            <person name="Lemieux S."/>
            <person name="Malavazi I."/>
            <person name="Orvis J."/>
            <person name="Roemer T."/>
            <person name="Ronning C.M."/>
            <person name="Sundaram J.P."/>
            <person name="Sutton G."/>
            <person name="Turner G."/>
            <person name="Venter J.C."/>
            <person name="White O.R."/>
            <person name="Whitty B.R."/>
            <person name="Youngman P."/>
            <person name="Wolfe K.H."/>
            <person name="Goldman G.H."/>
            <person name="Wortman J.R."/>
            <person name="Jiang B."/>
            <person name="Denning D.W."/>
            <person name="Nierman W.C."/>
        </authorList>
    </citation>
    <scope>NUCLEOTIDE SEQUENCE [LARGE SCALE GENOMIC DNA]</scope>
    <source>
        <strain>ATCC 1020 / DSM 3700 / CBS 544.65 / FGSC A1164 / JCM 1740 / NRRL 181 / WB 181</strain>
    </source>
</reference>
<evidence type="ECO:0000250" key="1"/>
<evidence type="ECO:0000255" key="2">
    <source>
        <dbReference type="PROSITE-ProRule" id="PRU00058"/>
    </source>
</evidence>
<evidence type="ECO:0000255" key="3">
    <source>
        <dbReference type="PROSITE-ProRule" id="PRU00126"/>
    </source>
</evidence>
<evidence type="ECO:0000255" key="4">
    <source>
        <dbReference type="PROSITE-ProRule" id="PRU01215"/>
    </source>
</evidence>
<evidence type="ECO:0000305" key="5"/>
<feature type="chain" id="PRO_0000292462" description="Protein fyv10">
    <location>
        <begin position="1"/>
        <end position="406"/>
    </location>
</feature>
<feature type="domain" description="LisH" evidence="3">
    <location>
        <begin position="126"/>
        <end position="158"/>
    </location>
</feature>
<feature type="domain" description="CTLH" evidence="2">
    <location>
        <begin position="164"/>
        <end position="221"/>
    </location>
</feature>
<feature type="zinc finger region" description="RING-Gid-type" evidence="4">
    <location>
        <begin position="329"/>
        <end position="391"/>
    </location>
</feature>
<gene>
    <name type="primary">fyv10</name>
    <name type="ORF">NFIA_037390</name>
</gene>
<protein>
    <recommendedName>
        <fullName>Protein fyv10</fullName>
    </recommendedName>
</protein>
<name>FYV10_NEOFI</name>
<dbReference type="EMBL" id="DS027686">
    <property type="protein sequence ID" value="EAW24165.1"/>
    <property type="status" value="ALT_SEQ"/>
    <property type="molecule type" value="Genomic_DNA"/>
</dbReference>
<dbReference type="RefSeq" id="XP_001266062.1">
    <property type="nucleotide sequence ID" value="XM_001266061.1"/>
</dbReference>
<dbReference type="SMR" id="A1CZJ5"/>
<dbReference type="STRING" id="331117.A1CZJ5"/>
<dbReference type="EnsemblFungi" id="EAW24165">
    <property type="protein sequence ID" value="EAW24165"/>
    <property type="gene ID" value="NFIA_037390"/>
</dbReference>
<dbReference type="GeneID" id="4592695"/>
<dbReference type="KEGG" id="nfi:NFIA_037390"/>
<dbReference type="VEuPathDB" id="FungiDB:NFIA_037390"/>
<dbReference type="OrthoDB" id="1933455at2759"/>
<dbReference type="Proteomes" id="UP000006702">
    <property type="component" value="Unassembled WGS sequence"/>
</dbReference>
<dbReference type="GO" id="GO:0005737">
    <property type="term" value="C:cytoplasm"/>
    <property type="evidence" value="ECO:0007669"/>
    <property type="project" value="UniProtKB-SubCell"/>
</dbReference>
<dbReference type="GO" id="GO:0034657">
    <property type="term" value="C:GID complex"/>
    <property type="evidence" value="ECO:0007669"/>
    <property type="project" value="TreeGrafter"/>
</dbReference>
<dbReference type="GO" id="GO:0005634">
    <property type="term" value="C:nucleus"/>
    <property type="evidence" value="ECO:0007669"/>
    <property type="project" value="UniProtKB-SubCell"/>
</dbReference>
<dbReference type="GO" id="GO:0061630">
    <property type="term" value="F:ubiquitin protein ligase activity"/>
    <property type="evidence" value="ECO:0007669"/>
    <property type="project" value="InterPro"/>
</dbReference>
<dbReference type="GO" id="GO:0008270">
    <property type="term" value="F:zinc ion binding"/>
    <property type="evidence" value="ECO:0007669"/>
    <property type="project" value="UniProtKB-KW"/>
</dbReference>
<dbReference type="GO" id="GO:0045721">
    <property type="term" value="P:negative regulation of gluconeogenesis"/>
    <property type="evidence" value="ECO:0007669"/>
    <property type="project" value="UniProtKB-ARBA"/>
</dbReference>
<dbReference type="GO" id="GO:0043161">
    <property type="term" value="P:proteasome-mediated ubiquitin-dependent protein catabolic process"/>
    <property type="evidence" value="ECO:0007669"/>
    <property type="project" value="InterPro"/>
</dbReference>
<dbReference type="InterPro" id="IPR013144">
    <property type="entry name" value="CRA_dom"/>
</dbReference>
<dbReference type="InterPro" id="IPR024964">
    <property type="entry name" value="CTLH/CRA"/>
</dbReference>
<dbReference type="InterPro" id="IPR006595">
    <property type="entry name" value="CTLH_C"/>
</dbReference>
<dbReference type="InterPro" id="IPR045098">
    <property type="entry name" value="Fyv10_fam"/>
</dbReference>
<dbReference type="InterPro" id="IPR006594">
    <property type="entry name" value="LisH"/>
</dbReference>
<dbReference type="InterPro" id="IPR044063">
    <property type="entry name" value="ZF_RING_GID"/>
</dbReference>
<dbReference type="PANTHER" id="PTHR12170:SF2">
    <property type="entry name" value="E3 UBIQUITIN-PROTEIN TRANSFERASE MAEA"/>
    <property type="match status" value="1"/>
</dbReference>
<dbReference type="PANTHER" id="PTHR12170">
    <property type="entry name" value="MACROPHAGE ERYTHROBLAST ATTACHER-RELATED"/>
    <property type="match status" value="1"/>
</dbReference>
<dbReference type="Pfam" id="PF10607">
    <property type="entry name" value="CTLH"/>
    <property type="match status" value="1"/>
</dbReference>
<dbReference type="SMART" id="SM00757">
    <property type="entry name" value="CRA"/>
    <property type="match status" value="1"/>
</dbReference>
<dbReference type="SMART" id="SM00668">
    <property type="entry name" value="CTLH"/>
    <property type="match status" value="1"/>
</dbReference>
<dbReference type="SMART" id="SM00667">
    <property type="entry name" value="LisH"/>
    <property type="match status" value="1"/>
</dbReference>
<dbReference type="PROSITE" id="PS50897">
    <property type="entry name" value="CTLH"/>
    <property type="match status" value="1"/>
</dbReference>
<dbReference type="PROSITE" id="PS50896">
    <property type="entry name" value="LISH"/>
    <property type="match status" value="1"/>
</dbReference>
<dbReference type="PROSITE" id="PS51867">
    <property type="entry name" value="ZF_RING_GID"/>
    <property type="match status" value="1"/>
</dbReference>